<name>GLGA_VIBVU</name>
<organism>
    <name type="scientific">Vibrio vulnificus (strain CMCP6)</name>
    <dbReference type="NCBI Taxonomy" id="216895"/>
    <lineage>
        <taxon>Bacteria</taxon>
        <taxon>Pseudomonadati</taxon>
        <taxon>Pseudomonadota</taxon>
        <taxon>Gammaproteobacteria</taxon>
        <taxon>Vibrionales</taxon>
        <taxon>Vibrionaceae</taxon>
        <taxon>Vibrio</taxon>
    </lineage>
</organism>
<evidence type="ECO:0000255" key="1">
    <source>
        <dbReference type="HAMAP-Rule" id="MF_00484"/>
    </source>
</evidence>
<reference key="1">
    <citation type="submission" date="2002-12" db="EMBL/GenBank/DDBJ databases">
        <title>Complete genome sequence of Vibrio vulnificus CMCP6.</title>
        <authorList>
            <person name="Rhee J.H."/>
            <person name="Kim S.Y."/>
            <person name="Chung S.S."/>
            <person name="Kim J.J."/>
            <person name="Moon Y.H."/>
            <person name="Jeong H."/>
            <person name="Choy H.E."/>
        </authorList>
    </citation>
    <scope>NUCLEOTIDE SEQUENCE [LARGE SCALE GENOMIC DNA]</scope>
    <source>
        <strain>CMCP6</strain>
    </source>
</reference>
<accession>Q8DAR0</accession>
<comment type="function">
    <text evidence="1">Synthesizes alpha-1,4-glucan chains using ADP-glucose.</text>
</comment>
<comment type="catalytic activity">
    <reaction evidence="1">
        <text>[(1-&gt;4)-alpha-D-glucosyl](n) + ADP-alpha-D-glucose = [(1-&gt;4)-alpha-D-glucosyl](n+1) + ADP + H(+)</text>
        <dbReference type="Rhea" id="RHEA:18189"/>
        <dbReference type="Rhea" id="RHEA-COMP:9584"/>
        <dbReference type="Rhea" id="RHEA-COMP:9587"/>
        <dbReference type="ChEBI" id="CHEBI:15378"/>
        <dbReference type="ChEBI" id="CHEBI:15444"/>
        <dbReference type="ChEBI" id="CHEBI:57498"/>
        <dbReference type="ChEBI" id="CHEBI:456216"/>
        <dbReference type="EC" id="2.4.1.21"/>
    </reaction>
</comment>
<comment type="pathway">
    <text evidence="1">Glycan biosynthesis; glycogen biosynthesis.</text>
</comment>
<comment type="similarity">
    <text evidence="1">Belongs to the glycosyltransferase 1 family. Bacterial/plant glycogen synthase subfamily.</text>
</comment>
<proteinExistence type="inferred from homology"/>
<keyword id="KW-0320">Glycogen biosynthesis</keyword>
<keyword id="KW-0328">Glycosyltransferase</keyword>
<keyword id="KW-0808">Transferase</keyword>
<dbReference type="EC" id="2.4.1.21" evidence="1"/>
<dbReference type="EMBL" id="AE016795">
    <property type="protein sequence ID" value="AAO10518.2"/>
    <property type="molecule type" value="Genomic_DNA"/>
</dbReference>
<dbReference type="RefSeq" id="WP_011080012.1">
    <property type="nucleotide sequence ID" value="NC_004459.3"/>
</dbReference>
<dbReference type="SMR" id="Q8DAR0"/>
<dbReference type="CAZy" id="GT5">
    <property type="family name" value="Glycosyltransferase Family 5"/>
</dbReference>
<dbReference type="KEGG" id="vvu:VV1_2132"/>
<dbReference type="HOGENOM" id="CLU_009583_18_2_6"/>
<dbReference type="UniPathway" id="UPA00164"/>
<dbReference type="Proteomes" id="UP000002275">
    <property type="component" value="Chromosome 1"/>
</dbReference>
<dbReference type="GO" id="GO:0005829">
    <property type="term" value="C:cytosol"/>
    <property type="evidence" value="ECO:0007669"/>
    <property type="project" value="TreeGrafter"/>
</dbReference>
<dbReference type="GO" id="GO:0009011">
    <property type="term" value="F:alpha-1,4-glucan glucosyltransferase (ADP-glucose donor) activity"/>
    <property type="evidence" value="ECO:0007669"/>
    <property type="project" value="UniProtKB-UniRule"/>
</dbReference>
<dbReference type="GO" id="GO:0004373">
    <property type="term" value="F:alpha-1,4-glucan glucosyltransferase (UDP-glucose donor) activity"/>
    <property type="evidence" value="ECO:0007669"/>
    <property type="project" value="InterPro"/>
</dbReference>
<dbReference type="GO" id="GO:0005978">
    <property type="term" value="P:glycogen biosynthetic process"/>
    <property type="evidence" value="ECO:0007669"/>
    <property type="project" value="UniProtKB-UniRule"/>
</dbReference>
<dbReference type="CDD" id="cd03791">
    <property type="entry name" value="GT5_Glycogen_synthase_DULL1-like"/>
    <property type="match status" value="1"/>
</dbReference>
<dbReference type="Gene3D" id="3.40.50.2000">
    <property type="entry name" value="Glycogen Phosphorylase B"/>
    <property type="match status" value="2"/>
</dbReference>
<dbReference type="HAMAP" id="MF_00484">
    <property type="entry name" value="Glycogen_synth"/>
    <property type="match status" value="1"/>
</dbReference>
<dbReference type="InterPro" id="IPR001296">
    <property type="entry name" value="Glyco_trans_1"/>
</dbReference>
<dbReference type="InterPro" id="IPR011835">
    <property type="entry name" value="GS/SS"/>
</dbReference>
<dbReference type="InterPro" id="IPR013534">
    <property type="entry name" value="Starch_synth_cat_dom"/>
</dbReference>
<dbReference type="NCBIfam" id="TIGR02095">
    <property type="entry name" value="glgA"/>
    <property type="match status" value="1"/>
</dbReference>
<dbReference type="NCBIfam" id="NF001903">
    <property type="entry name" value="PRK00654.2-2"/>
    <property type="match status" value="1"/>
</dbReference>
<dbReference type="NCBIfam" id="NF001906">
    <property type="entry name" value="PRK00654.2-5"/>
    <property type="match status" value="1"/>
</dbReference>
<dbReference type="PANTHER" id="PTHR45825:SF11">
    <property type="entry name" value="ALPHA AMYLASE DOMAIN-CONTAINING PROTEIN"/>
    <property type="match status" value="1"/>
</dbReference>
<dbReference type="PANTHER" id="PTHR45825">
    <property type="entry name" value="GRANULE-BOUND STARCH SYNTHASE 1, CHLOROPLASTIC/AMYLOPLASTIC"/>
    <property type="match status" value="1"/>
</dbReference>
<dbReference type="Pfam" id="PF08323">
    <property type="entry name" value="Glyco_transf_5"/>
    <property type="match status" value="1"/>
</dbReference>
<dbReference type="Pfam" id="PF00534">
    <property type="entry name" value="Glycos_transf_1"/>
    <property type="match status" value="1"/>
</dbReference>
<dbReference type="SUPFAM" id="SSF53756">
    <property type="entry name" value="UDP-Glycosyltransferase/glycogen phosphorylase"/>
    <property type="match status" value="1"/>
</dbReference>
<feature type="chain" id="PRO_0000188662" description="Glycogen synthase">
    <location>
        <begin position="1"/>
        <end position="485"/>
    </location>
</feature>
<feature type="binding site" evidence="1">
    <location>
        <position position="20"/>
    </location>
    <ligand>
        <name>ADP-alpha-D-glucose</name>
        <dbReference type="ChEBI" id="CHEBI:57498"/>
    </ligand>
</feature>
<gene>
    <name evidence="1" type="primary">glgA</name>
    <name type="ordered locus">VV1_2132</name>
</gene>
<protein>
    <recommendedName>
        <fullName evidence="1">Glycogen synthase</fullName>
        <ecNumber evidence="1">2.4.1.21</ecNumber>
    </recommendedName>
    <alternativeName>
        <fullName evidence="1">Starch [bacterial glycogen] synthase</fullName>
    </alternativeName>
</protein>
<sequence length="485" mass="54244">MATNPLSILFVASEVEGLIKSGGLADVAKALPEALVNLQHDARIAIPAYTAIPDVCDDEVILDTHLETWPHTHYQVKKRFLGDNPVYLIACGHYFDRPSMYAENNQAYTDNGERFAFFSAACLDMLPKIGFQPDIVHANDWHTGLVPFLLKHRYGQDPFFAQTKSILSIHNAVFKGVFHYDEMQCLPEFHCRNVPDAAVSSTHMTMLKAGVMNADKINAVSPTYAEELKTELGSHGMAWEFQQRAGDLVGILNGCDYSAWHPDTDSYLPINYKATKQSMVRGKNGCKRALQEQVGLPIKDVAMFGMVCRLTHQKGVHYLLPVLTEFLKLDVQLVLVGTGDPLLAAQLRDVAAQFGEKFVFVEAYNNQLAHLVEAASDFFLMPSEFEPCGLNQIYSMAYGSLPIVRGVGGLKDSVCDYDVNPETATGFVFYEPTAQALLITMQRALLLYAQNLTELRRVQLYAMERDFCWNKAAEQYVELYRSALK</sequence>